<accession>Q3Z6G6</accession>
<reference key="1">
    <citation type="journal article" date="2005" name="Science">
        <title>Genome sequence of the PCE-dechlorinating bacterium Dehalococcoides ethenogenes.</title>
        <authorList>
            <person name="Seshadri R."/>
            <person name="Adrian L."/>
            <person name="Fouts D.E."/>
            <person name="Eisen J.A."/>
            <person name="Phillippy A.M."/>
            <person name="Methe B.A."/>
            <person name="Ward N.L."/>
            <person name="Nelson W.C."/>
            <person name="DeBoy R.T."/>
            <person name="Khouri H.M."/>
            <person name="Kolonay J.F."/>
            <person name="Dodson R.J."/>
            <person name="Daugherty S.C."/>
            <person name="Brinkac L.M."/>
            <person name="Sullivan S.A."/>
            <person name="Madupu R."/>
            <person name="Nelson K.E."/>
            <person name="Kang K.H."/>
            <person name="Impraim M."/>
            <person name="Tran K."/>
            <person name="Robinson J.M."/>
            <person name="Forberger H.A."/>
            <person name="Fraser C.M."/>
            <person name="Zinder S.H."/>
            <person name="Heidelberg J.F."/>
        </authorList>
    </citation>
    <scope>NUCLEOTIDE SEQUENCE [LARGE SCALE GENOMIC DNA]</scope>
    <source>
        <strain>ATCC BAA-2266 / KCTC 15142 / 195</strain>
    </source>
</reference>
<sequence length="341" mass="35748">MIKEAIGSLVLGKSLTLEQSASVMDEIMEGKTTPAQIGAFLTALRVKGETAEEIAGLANVMRAKSTRISTSTPVLDIVGIGGDGINTFNISTTAAFVISGAGIKVAKHGNRAASSMCGSADVLEALGIKIDLNAEQVKICIEQIGIGFMFAPVFHPAMKFVAPSRREIGIRTVFNILGPLTNPASAQYQLIGVPEIGLGDKIISALCHMDIKHALVVHGLDGMDEMSISGDSVIWELKDKEIIKFRHTVSPREMGLEQVSLQAVKGGAAEENALTLRAILSGAKGPKRDVVLLNAAAALMVADKIDTIAEGISLAAEIIDNGLALNKLESLIKLSQSLASG</sequence>
<proteinExistence type="inferred from homology"/>
<keyword id="KW-0028">Amino-acid biosynthesis</keyword>
<keyword id="KW-0057">Aromatic amino acid biosynthesis</keyword>
<keyword id="KW-0328">Glycosyltransferase</keyword>
<keyword id="KW-0460">Magnesium</keyword>
<keyword id="KW-0479">Metal-binding</keyword>
<keyword id="KW-0808">Transferase</keyword>
<keyword id="KW-0822">Tryptophan biosynthesis</keyword>
<name>TRPD_DEHM1</name>
<organism>
    <name type="scientific">Dehalococcoides mccartyi (strain ATCC BAA-2266 / KCTC 15142 / 195)</name>
    <name type="common">Dehalococcoides ethenogenes (strain 195)</name>
    <dbReference type="NCBI Taxonomy" id="243164"/>
    <lineage>
        <taxon>Bacteria</taxon>
        <taxon>Bacillati</taxon>
        <taxon>Chloroflexota</taxon>
        <taxon>Dehalococcoidia</taxon>
        <taxon>Dehalococcoidales</taxon>
        <taxon>Dehalococcoidaceae</taxon>
        <taxon>Dehalococcoides</taxon>
    </lineage>
</organism>
<evidence type="ECO:0000255" key="1">
    <source>
        <dbReference type="HAMAP-Rule" id="MF_00211"/>
    </source>
</evidence>
<protein>
    <recommendedName>
        <fullName evidence="1">Anthranilate phosphoribosyltransferase</fullName>
        <ecNumber evidence="1">2.4.2.18</ecNumber>
    </recommendedName>
</protein>
<comment type="function">
    <text evidence="1">Catalyzes the transfer of the phosphoribosyl group of 5-phosphorylribose-1-pyrophosphate (PRPP) to anthranilate to yield N-(5'-phosphoribosyl)-anthranilate (PRA).</text>
</comment>
<comment type="catalytic activity">
    <reaction evidence="1">
        <text>N-(5-phospho-beta-D-ribosyl)anthranilate + diphosphate = 5-phospho-alpha-D-ribose 1-diphosphate + anthranilate</text>
        <dbReference type="Rhea" id="RHEA:11768"/>
        <dbReference type="ChEBI" id="CHEBI:16567"/>
        <dbReference type="ChEBI" id="CHEBI:18277"/>
        <dbReference type="ChEBI" id="CHEBI:33019"/>
        <dbReference type="ChEBI" id="CHEBI:58017"/>
        <dbReference type="EC" id="2.4.2.18"/>
    </reaction>
</comment>
<comment type="cofactor">
    <cofactor evidence="1">
        <name>Mg(2+)</name>
        <dbReference type="ChEBI" id="CHEBI:18420"/>
    </cofactor>
    <text evidence="1">Binds 2 magnesium ions per monomer.</text>
</comment>
<comment type="pathway">
    <text evidence="1">Amino-acid biosynthesis; L-tryptophan biosynthesis; L-tryptophan from chorismate: step 2/5.</text>
</comment>
<comment type="subunit">
    <text evidence="1">Homodimer.</text>
</comment>
<comment type="similarity">
    <text evidence="1">Belongs to the anthranilate phosphoribosyltransferase family.</text>
</comment>
<gene>
    <name evidence="1" type="primary">trpD</name>
    <name type="ordered locus">DET1483</name>
</gene>
<feature type="chain" id="PRO_0000227153" description="Anthranilate phosphoribosyltransferase">
    <location>
        <begin position="1"/>
        <end position="341"/>
    </location>
</feature>
<feature type="binding site" evidence="1">
    <location>
        <position position="79"/>
    </location>
    <ligand>
        <name>5-phospho-alpha-D-ribose 1-diphosphate</name>
        <dbReference type="ChEBI" id="CHEBI:58017"/>
    </ligand>
</feature>
<feature type="binding site" evidence="1">
    <location>
        <position position="79"/>
    </location>
    <ligand>
        <name>anthranilate</name>
        <dbReference type="ChEBI" id="CHEBI:16567"/>
        <label>1</label>
    </ligand>
</feature>
<feature type="binding site" evidence="1">
    <location>
        <begin position="82"/>
        <end position="83"/>
    </location>
    <ligand>
        <name>5-phospho-alpha-D-ribose 1-diphosphate</name>
        <dbReference type="ChEBI" id="CHEBI:58017"/>
    </ligand>
</feature>
<feature type="binding site" evidence="1">
    <location>
        <position position="87"/>
    </location>
    <ligand>
        <name>5-phospho-alpha-D-ribose 1-diphosphate</name>
        <dbReference type="ChEBI" id="CHEBI:58017"/>
    </ligand>
</feature>
<feature type="binding site" evidence="1">
    <location>
        <begin position="89"/>
        <end position="92"/>
    </location>
    <ligand>
        <name>5-phospho-alpha-D-ribose 1-diphosphate</name>
        <dbReference type="ChEBI" id="CHEBI:58017"/>
    </ligand>
</feature>
<feature type="binding site" evidence="1">
    <location>
        <position position="91"/>
    </location>
    <ligand>
        <name>Mg(2+)</name>
        <dbReference type="ChEBI" id="CHEBI:18420"/>
        <label>1</label>
    </ligand>
</feature>
<feature type="binding site" evidence="1">
    <location>
        <begin position="107"/>
        <end position="115"/>
    </location>
    <ligand>
        <name>5-phospho-alpha-D-ribose 1-diphosphate</name>
        <dbReference type="ChEBI" id="CHEBI:58017"/>
    </ligand>
</feature>
<feature type="binding site" evidence="1">
    <location>
        <position position="110"/>
    </location>
    <ligand>
        <name>anthranilate</name>
        <dbReference type="ChEBI" id="CHEBI:16567"/>
        <label>1</label>
    </ligand>
</feature>
<feature type="binding site" evidence="1">
    <location>
        <position position="119"/>
    </location>
    <ligand>
        <name>5-phospho-alpha-D-ribose 1-diphosphate</name>
        <dbReference type="ChEBI" id="CHEBI:58017"/>
    </ligand>
</feature>
<feature type="binding site" evidence="1">
    <location>
        <position position="165"/>
    </location>
    <ligand>
        <name>anthranilate</name>
        <dbReference type="ChEBI" id="CHEBI:16567"/>
        <label>2</label>
    </ligand>
</feature>
<feature type="binding site" evidence="1">
    <location>
        <position position="224"/>
    </location>
    <ligand>
        <name>Mg(2+)</name>
        <dbReference type="ChEBI" id="CHEBI:18420"/>
        <label>2</label>
    </ligand>
</feature>
<feature type="binding site" evidence="1">
    <location>
        <position position="225"/>
    </location>
    <ligand>
        <name>Mg(2+)</name>
        <dbReference type="ChEBI" id="CHEBI:18420"/>
        <label>1</label>
    </ligand>
</feature>
<feature type="binding site" evidence="1">
    <location>
        <position position="225"/>
    </location>
    <ligand>
        <name>Mg(2+)</name>
        <dbReference type="ChEBI" id="CHEBI:18420"/>
        <label>2</label>
    </ligand>
</feature>
<dbReference type="EC" id="2.4.2.18" evidence="1"/>
<dbReference type="EMBL" id="CP000027">
    <property type="protein sequence ID" value="AAW39329.1"/>
    <property type="molecule type" value="Genomic_DNA"/>
</dbReference>
<dbReference type="RefSeq" id="WP_010937160.1">
    <property type="nucleotide sequence ID" value="NC_002936.3"/>
</dbReference>
<dbReference type="SMR" id="Q3Z6G6"/>
<dbReference type="FunCoup" id="Q3Z6G6">
    <property type="interactions" value="302"/>
</dbReference>
<dbReference type="STRING" id="243164.DET1483"/>
<dbReference type="GeneID" id="3229287"/>
<dbReference type="KEGG" id="det:DET1483"/>
<dbReference type="eggNOG" id="COG0547">
    <property type="taxonomic scope" value="Bacteria"/>
</dbReference>
<dbReference type="HOGENOM" id="CLU_034315_2_1_0"/>
<dbReference type="InParanoid" id="Q3Z6G6"/>
<dbReference type="UniPathway" id="UPA00035">
    <property type="reaction ID" value="UER00041"/>
</dbReference>
<dbReference type="Proteomes" id="UP000008289">
    <property type="component" value="Chromosome"/>
</dbReference>
<dbReference type="GO" id="GO:0005829">
    <property type="term" value="C:cytosol"/>
    <property type="evidence" value="ECO:0007669"/>
    <property type="project" value="TreeGrafter"/>
</dbReference>
<dbReference type="GO" id="GO:0004048">
    <property type="term" value="F:anthranilate phosphoribosyltransferase activity"/>
    <property type="evidence" value="ECO:0007669"/>
    <property type="project" value="UniProtKB-UniRule"/>
</dbReference>
<dbReference type="GO" id="GO:0000287">
    <property type="term" value="F:magnesium ion binding"/>
    <property type="evidence" value="ECO:0007669"/>
    <property type="project" value="UniProtKB-UniRule"/>
</dbReference>
<dbReference type="GO" id="GO:0000162">
    <property type="term" value="P:L-tryptophan biosynthetic process"/>
    <property type="evidence" value="ECO:0007669"/>
    <property type="project" value="UniProtKB-UniRule"/>
</dbReference>
<dbReference type="FunFam" id="3.40.1030.10:FF:000002">
    <property type="entry name" value="Anthranilate phosphoribosyltransferase"/>
    <property type="match status" value="1"/>
</dbReference>
<dbReference type="Gene3D" id="3.40.1030.10">
    <property type="entry name" value="Nucleoside phosphorylase/phosphoribosyltransferase catalytic domain"/>
    <property type="match status" value="1"/>
</dbReference>
<dbReference type="Gene3D" id="1.20.970.10">
    <property type="entry name" value="Transferase, Pyrimidine Nucleoside Phosphorylase, Chain C"/>
    <property type="match status" value="1"/>
</dbReference>
<dbReference type="HAMAP" id="MF_00211">
    <property type="entry name" value="TrpD"/>
    <property type="match status" value="1"/>
</dbReference>
<dbReference type="InterPro" id="IPR005940">
    <property type="entry name" value="Anthranilate_Pribosyl_Tfrase"/>
</dbReference>
<dbReference type="InterPro" id="IPR000312">
    <property type="entry name" value="Glycosyl_Trfase_fam3"/>
</dbReference>
<dbReference type="InterPro" id="IPR017459">
    <property type="entry name" value="Glycosyl_Trfase_fam3_N_dom"/>
</dbReference>
<dbReference type="InterPro" id="IPR036320">
    <property type="entry name" value="Glycosyl_Trfase_fam3_N_dom_sf"/>
</dbReference>
<dbReference type="InterPro" id="IPR035902">
    <property type="entry name" value="Nuc_phospho_transferase"/>
</dbReference>
<dbReference type="NCBIfam" id="TIGR01245">
    <property type="entry name" value="trpD"/>
    <property type="match status" value="1"/>
</dbReference>
<dbReference type="PANTHER" id="PTHR43285">
    <property type="entry name" value="ANTHRANILATE PHOSPHORIBOSYLTRANSFERASE"/>
    <property type="match status" value="1"/>
</dbReference>
<dbReference type="PANTHER" id="PTHR43285:SF2">
    <property type="entry name" value="ANTHRANILATE PHOSPHORIBOSYLTRANSFERASE"/>
    <property type="match status" value="1"/>
</dbReference>
<dbReference type="Pfam" id="PF02885">
    <property type="entry name" value="Glycos_trans_3N"/>
    <property type="match status" value="1"/>
</dbReference>
<dbReference type="Pfam" id="PF00591">
    <property type="entry name" value="Glycos_transf_3"/>
    <property type="match status" value="1"/>
</dbReference>
<dbReference type="SUPFAM" id="SSF52418">
    <property type="entry name" value="Nucleoside phosphorylase/phosphoribosyltransferase catalytic domain"/>
    <property type="match status" value="1"/>
</dbReference>
<dbReference type="SUPFAM" id="SSF47648">
    <property type="entry name" value="Nucleoside phosphorylase/phosphoribosyltransferase N-terminal domain"/>
    <property type="match status" value="1"/>
</dbReference>